<reference key="1">
    <citation type="journal article" date="2006" name="Ann. Bot.">
        <title>Proteome profiling of Populus euphratica Oliv. upon heat stress.</title>
        <authorList>
            <person name="Ferreira S."/>
            <person name="Hjernoe K."/>
            <person name="Larsen M."/>
            <person name="Wingsle G."/>
            <person name="Larsen P."/>
            <person name="Fey S."/>
            <person name="Roepstorff P."/>
            <person name="Pais M.S."/>
        </authorList>
    </citation>
    <scope>PROTEIN SEQUENCE</scope>
    <source>
        <tissue>Leaf</tissue>
    </source>
</reference>
<name>SAT_POPEU</name>
<organism>
    <name type="scientific">Populus euphratica</name>
    <name type="common">Euphrates poplar</name>
    <dbReference type="NCBI Taxonomy" id="75702"/>
    <lineage>
        <taxon>Eukaryota</taxon>
        <taxon>Viridiplantae</taxon>
        <taxon>Streptophyta</taxon>
        <taxon>Embryophyta</taxon>
        <taxon>Tracheophyta</taxon>
        <taxon>Spermatophyta</taxon>
        <taxon>Magnoliopsida</taxon>
        <taxon>eudicotyledons</taxon>
        <taxon>Gunneridae</taxon>
        <taxon>Pentapetalae</taxon>
        <taxon>rosids</taxon>
        <taxon>fabids</taxon>
        <taxon>Malpighiales</taxon>
        <taxon>Salicaceae</taxon>
        <taxon>Saliceae</taxon>
        <taxon>Populus</taxon>
    </lineage>
</organism>
<keyword id="KW-0067">ATP-binding</keyword>
<keyword id="KW-0903">Direct protein sequencing</keyword>
<keyword id="KW-0547">Nucleotide-binding</keyword>
<keyword id="KW-0548">Nucleotidyltransferase</keyword>
<keyword id="KW-1185">Reference proteome</keyword>
<keyword id="KW-0808">Transferase</keyword>
<accession>P84547</accession>
<comment type="catalytic activity">
    <reaction evidence="1">
        <text>sulfate + ATP + H(+) = adenosine 5'-phosphosulfate + diphosphate</text>
        <dbReference type="Rhea" id="RHEA:18133"/>
        <dbReference type="ChEBI" id="CHEBI:15378"/>
        <dbReference type="ChEBI" id="CHEBI:16189"/>
        <dbReference type="ChEBI" id="CHEBI:30616"/>
        <dbReference type="ChEBI" id="CHEBI:33019"/>
        <dbReference type="ChEBI" id="CHEBI:58243"/>
        <dbReference type="EC" id="2.7.7.4"/>
    </reaction>
</comment>
<comment type="similarity">
    <text evidence="2">Belongs to the sulfate adenylyltransferase family.</text>
</comment>
<feature type="chain" id="PRO_0000105957" description="Sulfate adenylyltransferase">
    <location>
        <begin position="1" status="less than"/>
        <end position="11" status="greater than"/>
    </location>
</feature>
<feature type="non-terminal residue">
    <location>
        <position position="1"/>
    </location>
</feature>
<feature type="non-terminal residue">
    <location>
        <position position="11"/>
    </location>
</feature>
<dbReference type="EC" id="2.7.7.4"/>
<dbReference type="Proteomes" id="UP000694918">
    <property type="component" value="Unplaced"/>
</dbReference>
<dbReference type="GO" id="GO:0005524">
    <property type="term" value="F:ATP binding"/>
    <property type="evidence" value="ECO:0007669"/>
    <property type="project" value="UniProtKB-KW"/>
</dbReference>
<dbReference type="GO" id="GO:0004781">
    <property type="term" value="F:sulfate adenylyltransferase (ATP) activity"/>
    <property type="evidence" value="ECO:0007669"/>
    <property type="project" value="UniProtKB-EC"/>
</dbReference>
<proteinExistence type="evidence at protein level"/>
<sequence length="11" mass="1265">KADAVFAFQLR</sequence>
<evidence type="ECO:0000250" key="1">
    <source>
        <dbReference type="UniProtKB" id="O43252"/>
    </source>
</evidence>
<evidence type="ECO:0000255" key="2"/>
<protein>
    <recommendedName>
        <fullName>Sulfate adenylyltransferase</fullName>
        <ecNumber>2.7.7.4</ecNumber>
    </recommendedName>
    <alternativeName>
        <fullName>ATP-sulfurylase</fullName>
    </alternativeName>
    <alternativeName>
        <fullName>Sulfate adenylate transferase</fullName>
        <shortName>SAT</shortName>
    </alternativeName>
</protein>